<comment type="function">
    <text evidence="1">DNA-dependent RNA polymerase catalyzes the transcription of DNA into RNA using the four ribonucleoside triphosphates as substrates.</text>
</comment>
<comment type="catalytic activity">
    <reaction evidence="1">
        <text>RNA(n) + a ribonucleoside 5'-triphosphate = RNA(n+1) + diphosphate</text>
        <dbReference type="Rhea" id="RHEA:21248"/>
        <dbReference type="Rhea" id="RHEA-COMP:14527"/>
        <dbReference type="Rhea" id="RHEA-COMP:17342"/>
        <dbReference type="ChEBI" id="CHEBI:33019"/>
        <dbReference type="ChEBI" id="CHEBI:61557"/>
        <dbReference type="ChEBI" id="CHEBI:140395"/>
        <dbReference type="EC" id="2.7.7.6"/>
    </reaction>
</comment>
<comment type="subunit">
    <text evidence="1">In plastids the minimal PEP RNA polymerase catalytic core is composed of four subunits: alpha, beta, beta', and beta''. When a (nuclear-encoded) sigma factor is associated with the core the holoenzyme is formed, which can initiate transcription.</text>
</comment>
<comment type="subcellular location">
    <subcellularLocation>
        <location>Plastid</location>
        <location>Chloroplast</location>
    </subcellularLocation>
</comment>
<comment type="domain">
    <text evidence="1">The N-terminal domain is essential for RNAP assembly and basal transcription, whereas the C-terminal domain is involved in interaction with transcriptional regulators and with upstream promoter elements.</text>
</comment>
<comment type="similarity">
    <text evidence="1">Belongs to the RNA polymerase alpha chain family.</text>
</comment>
<keyword id="KW-0150">Chloroplast</keyword>
<keyword id="KW-0240">DNA-directed RNA polymerase</keyword>
<keyword id="KW-0548">Nucleotidyltransferase</keyword>
<keyword id="KW-0934">Plastid</keyword>
<keyword id="KW-0804">Transcription</keyword>
<keyword id="KW-0808">Transferase</keyword>
<reference key="1">
    <citation type="submission" date="2007-03" db="EMBL/GenBank/DDBJ databases">
        <title>Sequencing analysis of Capsella bursa-pastoris JO22 chloroplast DNA.</title>
        <authorList>
            <person name="Hosouchi T."/>
            <person name="Tsuruoka H."/>
            <person name="Kotani H."/>
        </authorList>
    </citation>
    <scope>NUCLEOTIDE SEQUENCE [LARGE SCALE GENOMIC DNA]</scope>
</reference>
<proteinExistence type="inferred from homology"/>
<protein>
    <recommendedName>
        <fullName evidence="1">DNA-directed RNA polymerase subunit alpha</fullName>
        <shortName evidence="1">PEP</shortName>
        <ecNumber evidence="1">2.7.7.6</ecNumber>
    </recommendedName>
    <alternativeName>
        <fullName evidence="1">Plastid-encoded RNA polymerase subunit alpha</fullName>
        <shortName evidence="1">RNA polymerase subunit alpha</shortName>
    </alternativeName>
</protein>
<feature type="chain" id="PRO_0000296888" description="DNA-directed RNA polymerase subunit alpha">
    <location>
        <begin position="1"/>
        <end position="327"/>
    </location>
</feature>
<feature type="region of interest" description="Alpha N-terminal domain (alpha-NTD)" evidence="1">
    <location>
        <begin position="1"/>
        <end position="233"/>
    </location>
</feature>
<feature type="region of interest" description="Alpha C-terminal domain (alpha-CTD)" evidence="1">
    <location>
        <begin position="264"/>
        <end position="327"/>
    </location>
</feature>
<dbReference type="EC" id="2.7.7.6" evidence="1"/>
<dbReference type="EMBL" id="AP009371">
    <property type="protein sequence ID" value="BAF50229.1"/>
    <property type="molecule type" value="Genomic_DNA"/>
</dbReference>
<dbReference type="RefSeq" id="YP_001123405.1">
    <property type="nucleotide sequence ID" value="NC_009270.1"/>
</dbReference>
<dbReference type="SMR" id="A4QKM4"/>
<dbReference type="GeneID" id="4961696"/>
<dbReference type="GO" id="GO:0009507">
    <property type="term" value="C:chloroplast"/>
    <property type="evidence" value="ECO:0007669"/>
    <property type="project" value="UniProtKB-SubCell"/>
</dbReference>
<dbReference type="GO" id="GO:0000428">
    <property type="term" value="C:DNA-directed RNA polymerase complex"/>
    <property type="evidence" value="ECO:0007669"/>
    <property type="project" value="UniProtKB-KW"/>
</dbReference>
<dbReference type="GO" id="GO:0005739">
    <property type="term" value="C:mitochondrion"/>
    <property type="evidence" value="ECO:0007669"/>
    <property type="project" value="GOC"/>
</dbReference>
<dbReference type="GO" id="GO:0003677">
    <property type="term" value="F:DNA binding"/>
    <property type="evidence" value="ECO:0007669"/>
    <property type="project" value="UniProtKB-UniRule"/>
</dbReference>
<dbReference type="GO" id="GO:0003899">
    <property type="term" value="F:DNA-directed RNA polymerase activity"/>
    <property type="evidence" value="ECO:0007669"/>
    <property type="project" value="UniProtKB-UniRule"/>
</dbReference>
<dbReference type="GO" id="GO:0046983">
    <property type="term" value="F:protein dimerization activity"/>
    <property type="evidence" value="ECO:0007669"/>
    <property type="project" value="InterPro"/>
</dbReference>
<dbReference type="GO" id="GO:0006351">
    <property type="term" value="P:DNA-templated transcription"/>
    <property type="evidence" value="ECO:0007669"/>
    <property type="project" value="UniProtKB-UniRule"/>
</dbReference>
<dbReference type="CDD" id="cd06928">
    <property type="entry name" value="RNAP_alpha_NTD"/>
    <property type="match status" value="1"/>
</dbReference>
<dbReference type="FunFam" id="1.10.150.20:FF:000021">
    <property type="entry name" value="DNA-directed RNA polymerase subunit alpha"/>
    <property type="match status" value="1"/>
</dbReference>
<dbReference type="FunFam" id="2.170.120.12:FF:000001">
    <property type="entry name" value="DNA-directed RNA polymerase subunit alpha"/>
    <property type="match status" value="1"/>
</dbReference>
<dbReference type="FunFam" id="3.30.1360.10:FF:000039">
    <property type="entry name" value="DNA-directed RNA polymerase subunit alpha"/>
    <property type="match status" value="1"/>
</dbReference>
<dbReference type="Gene3D" id="1.10.150.20">
    <property type="entry name" value="5' to 3' exonuclease, C-terminal subdomain"/>
    <property type="match status" value="1"/>
</dbReference>
<dbReference type="Gene3D" id="2.170.120.12">
    <property type="entry name" value="DNA-directed RNA polymerase, insert domain"/>
    <property type="match status" value="1"/>
</dbReference>
<dbReference type="Gene3D" id="3.30.1360.10">
    <property type="entry name" value="RNA polymerase, RBP11-like subunit"/>
    <property type="match status" value="1"/>
</dbReference>
<dbReference type="HAMAP" id="MF_00059">
    <property type="entry name" value="RNApol_bact_RpoA"/>
    <property type="match status" value="1"/>
</dbReference>
<dbReference type="InterPro" id="IPR011262">
    <property type="entry name" value="DNA-dir_RNA_pol_insert"/>
</dbReference>
<dbReference type="InterPro" id="IPR011263">
    <property type="entry name" value="DNA-dir_RNA_pol_RpoA/D/Rpb3"/>
</dbReference>
<dbReference type="InterPro" id="IPR011773">
    <property type="entry name" value="DNA-dir_RpoA"/>
</dbReference>
<dbReference type="InterPro" id="IPR036603">
    <property type="entry name" value="RBP11-like"/>
</dbReference>
<dbReference type="InterPro" id="IPR011260">
    <property type="entry name" value="RNAP_asu_C"/>
</dbReference>
<dbReference type="InterPro" id="IPR036643">
    <property type="entry name" value="RNApol_insert_sf"/>
</dbReference>
<dbReference type="NCBIfam" id="TIGR02027">
    <property type="entry name" value="rpoA"/>
    <property type="match status" value="1"/>
</dbReference>
<dbReference type="Pfam" id="PF01000">
    <property type="entry name" value="RNA_pol_A_bac"/>
    <property type="match status" value="1"/>
</dbReference>
<dbReference type="Pfam" id="PF03118">
    <property type="entry name" value="RNA_pol_A_CTD"/>
    <property type="match status" value="1"/>
</dbReference>
<dbReference type="Pfam" id="PF01193">
    <property type="entry name" value="RNA_pol_L"/>
    <property type="match status" value="1"/>
</dbReference>
<dbReference type="SMART" id="SM00662">
    <property type="entry name" value="RPOLD"/>
    <property type="match status" value="1"/>
</dbReference>
<dbReference type="SUPFAM" id="SSF47789">
    <property type="entry name" value="C-terminal domain of RNA polymerase alpha subunit"/>
    <property type="match status" value="1"/>
</dbReference>
<dbReference type="SUPFAM" id="SSF56553">
    <property type="entry name" value="Insert subdomain of RNA polymerase alpha subunit"/>
    <property type="match status" value="1"/>
</dbReference>
<dbReference type="SUPFAM" id="SSF55257">
    <property type="entry name" value="RBP11-like subunits of RNA polymerase"/>
    <property type="match status" value="1"/>
</dbReference>
<sequence length="327" mass="37953">MVREKVKVSTRTLQWKCVESRRDSKRLYYGRFILSPLMKGQADTIGIAMRRALLGEIEGTCITRAKSENIPHDYSNIVGIQESVHEILMNLNEIVLRSNLYGTRNALICVQGPGYITARDIILPPSVEIIDNTQHIATLTEPIDLCIELKIERNRGYSLKMSNNFEDRSYPIDAVFMPVQNANHSIHSYGNGNEKQEILFLEIWTNGSLTPKEALHEASRNLINLFIPFLHVEEETFYLENNQHQVTLPFFPFHNRLVNLRKKTKELAFQYIFIDQLELPPRIYNCLKKSNIHTLLDLLNNSQEDLIKIEHFHVEDVKKILDILEKK</sequence>
<accession>A4QKM4</accession>
<evidence type="ECO:0000255" key="1">
    <source>
        <dbReference type="HAMAP-Rule" id="MF_00059"/>
    </source>
</evidence>
<name>RPOA_CAPBU</name>
<organism>
    <name type="scientific">Capsella bursa-pastoris</name>
    <name type="common">Shepherd's purse</name>
    <name type="synonym">Thlaspi bursa-pastoris</name>
    <dbReference type="NCBI Taxonomy" id="3719"/>
    <lineage>
        <taxon>Eukaryota</taxon>
        <taxon>Viridiplantae</taxon>
        <taxon>Streptophyta</taxon>
        <taxon>Embryophyta</taxon>
        <taxon>Tracheophyta</taxon>
        <taxon>Spermatophyta</taxon>
        <taxon>Magnoliopsida</taxon>
        <taxon>eudicotyledons</taxon>
        <taxon>Gunneridae</taxon>
        <taxon>Pentapetalae</taxon>
        <taxon>rosids</taxon>
        <taxon>malvids</taxon>
        <taxon>Brassicales</taxon>
        <taxon>Brassicaceae</taxon>
        <taxon>Camelineae</taxon>
        <taxon>Capsella</taxon>
    </lineage>
</organism>
<gene>
    <name evidence="1" type="primary">rpoA</name>
</gene>
<geneLocation type="chloroplast"/>